<organism>
    <name type="scientific">Dasypus novemcinctus</name>
    <name type="common">Nine-banded armadillo</name>
    <dbReference type="NCBI Taxonomy" id="9361"/>
    <lineage>
        <taxon>Eukaryota</taxon>
        <taxon>Metazoa</taxon>
        <taxon>Chordata</taxon>
        <taxon>Craniata</taxon>
        <taxon>Vertebrata</taxon>
        <taxon>Euteleostomi</taxon>
        <taxon>Mammalia</taxon>
        <taxon>Eutheria</taxon>
        <taxon>Xenarthra</taxon>
        <taxon>Cingulata</taxon>
        <taxon>Dasypodidae</taxon>
        <taxon>Dasypus</taxon>
    </lineage>
</organism>
<dbReference type="EC" id="7.1.1.2"/>
<dbReference type="EMBL" id="Y11832">
    <property type="protein sequence ID" value="CAA72529.1"/>
    <property type="molecule type" value="Genomic_DNA"/>
</dbReference>
<dbReference type="PIR" id="T11441">
    <property type="entry name" value="T11441"/>
</dbReference>
<dbReference type="RefSeq" id="NP_007459.1">
    <property type="nucleotide sequence ID" value="NC_001821.1"/>
</dbReference>
<dbReference type="SMR" id="O21325"/>
<dbReference type="GeneID" id="808126"/>
<dbReference type="KEGG" id="dnm:808126"/>
<dbReference type="CTD" id="4535"/>
<dbReference type="HOGENOM" id="CLU_015134_0_1_1"/>
<dbReference type="OMA" id="WSGWASN"/>
<dbReference type="GO" id="GO:0005743">
    <property type="term" value="C:mitochondrial inner membrane"/>
    <property type="evidence" value="ECO:0007669"/>
    <property type="project" value="UniProtKB-SubCell"/>
</dbReference>
<dbReference type="GO" id="GO:0045271">
    <property type="term" value="C:respiratory chain complex I"/>
    <property type="evidence" value="ECO:0007669"/>
    <property type="project" value="Ensembl"/>
</dbReference>
<dbReference type="GO" id="GO:0008137">
    <property type="term" value="F:NADH dehydrogenase (ubiquinone) activity"/>
    <property type="evidence" value="ECO:0007669"/>
    <property type="project" value="UniProtKB-EC"/>
</dbReference>
<dbReference type="GO" id="GO:0006120">
    <property type="term" value="P:mitochondrial electron transport, NADH to ubiquinone"/>
    <property type="evidence" value="ECO:0007669"/>
    <property type="project" value="Ensembl"/>
</dbReference>
<dbReference type="GO" id="GO:0032981">
    <property type="term" value="P:mitochondrial respiratory chain complex I assembly"/>
    <property type="evidence" value="ECO:0007669"/>
    <property type="project" value="Ensembl"/>
</dbReference>
<dbReference type="HAMAP" id="MF_01350">
    <property type="entry name" value="NDH1_NuoH"/>
    <property type="match status" value="1"/>
</dbReference>
<dbReference type="InterPro" id="IPR001694">
    <property type="entry name" value="NADH_UbQ_OxRdtase_su1/FPO"/>
</dbReference>
<dbReference type="InterPro" id="IPR018086">
    <property type="entry name" value="NADH_UbQ_OxRdtase_su1_CS"/>
</dbReference>
<dbReference type="PANTHER" id="PTHR11432">
    <property type="entry name" value="NADH DEHYDROGENASE SUBUNIT 1"/>
    <property type="match status" value="1"/>
</dbReference>
<dbReference type="PANTHER" id="PTHR11432:SF3">
    <property type="entry name" value="NADH-UBIQUINONE OXIDOREDUCTASE CHAIN 1"/>
    <property type="match status" value="1"/>
</dbReference>
<dbReference type="Pfam" id="PF00146">
    <property type="entry name" value="NADHdh"/>
    <property type="match status" value="1"/>
</dbReference>
<dbReference type="PROSITE" id="PS00667">
    <property type="entry name" value="COMPLEX1_ND1_1"/>
    <property type="match status" value="1"/>
</dbReference>
<dbReference type="PROSITE" id="PS00668">
    <property type="entry name" value="COMPLEX1_ND1_2"/>
    <property type="match status" value="1"/>
</dbReference>
<evidence type="ECO:0000250" key="1"/>
<evidence type="ECO:0000255" key="2"/>
<evidence type="ECO:0000305" key="3"/>
<sequence length="318" mass="35582">MYLINVLSLIIPILLAVAFLTLLERKILGYMQLRKGPNIVGPYGLLQPIADAIKLFIKEPLRPATSSKLMFTLAPTLALTLALSLWIPIPMPYPLVNLNLGVLFILAMSSLAVYSILWSGWASNSKYALIGALRAVAQTISYEVTLAIILLSIMMTNGSFTLSTLTTTQEHMWLIFPLWPLAMMWFISTLAETNRAPFDLTEGESELVSGFNVEYAAGPFALFFLAEYANIIMMNALTAILFFGAMHNPMFPELHTLNLITKTLILTMMFLWVRASYPRFRYDQLMHLLWKSFLPLTLALCMLHVSAPATFAGVPPHM</sequence>
<accession>O21325</accession>
<keyword id="KW-0249">Electron transport</keyword>
<keyword id="KW-0472">Membrane</keyword>
<keyword id="KW-0496">Mitochondrion</keyword>
<keyword id="KW-0999">Mitochondrion inner membrane</keyword>
<keyword id="KW-0520">NAD</keyword>
<keyword id="KW-0679">Respiratory chain</keyword>
<keyword id="KW-1278">Translocase</keyword>
<keyword id="KW-0812">Transmembrane</keyword>
<keyword id="KW-1133">Transmembrane helix</keyword>
<keyword id="KW-0813">Transport</keyword>
<keyword id="KW-0830">Ubiquinone</keyword>
<name>NU1M_DASNO</name>
<geneLocation type="mitochondrion"/>
<feature type="chain" id="PRO_0000117380" description="NADH-ubiquinone oxidoreductase chain 1">
    <location>
        <begin position="1"/>
        <end position="318"/>
    </location>
</feature>
<feature type="transmembrane region" description="Helical" evidence="2">
    <location>
        <begin position="3"/>
        <end position="23"/>
    </location>
</feature>
<feature type="transmembrane region" description="Helical" evidence="2">
    <location>
        <begin position="69"/>
        <end position="89"/>
    </location>
</feature>
<feature type="transmembrane region" description="Helical" evidence="2">
    <location>
        <begin position="100"/>
        <end position="120"/>
    </location>
</feature>
<feature type="transmembrane region" description="Helical" evidence="2">
    <location>
        <begin position="135"/>
        <end position="155"/>
    </location>
</feature>
<feature type="transmembrane region" description="Helical" evidence="2">
    <location>
        <begin position="171"/>
        <end position="191"/>
    </location>
</feature>
<feature type="transmembrane region" description="Helical" evidence="2">
    <location>
        <begin position="223"/>
        <end position="243"/>
    </location>
</feature>
<feature type="transmembrane region" description="Helical" evidence="2">
    <location>
        <begin position="253"/>
        <end position="273"/>
    </location>
</feature>
<feature type="transmembrane region" description="Helical" evidence="2">
    <location>
        <begin position="293"/>
        <end position="313"/>
    </location>
</feature>
<reference key="1">
    <citation type="journal article" date="1997" name="Mol. Biol. Evol.">
        <title>Phylogenetic analyses of mitochondrial DNA suggest a sister group relationship between Xenarthra (Edentata) and Ferungulates.</title>
        <authorList>
            <person name="Arnason U."/>
            <person name="Gullberg A."/>
            <person name="Janke A."/>
        </authorList>
    </citation>
    <scope>NUCLEOTIDE SEQUENCE [GENOMIC DNA]</scope>
</reference>
<proteinExistence type="inferred from homology"/>
<protein>
    <recommendedName>
        <fullName>NADH-ubiquinone oxidoreductase chain 1</fullName>
        <ecNumber>7.1.1.2</ecNumber>
    </recommendedName>
    <alternativeName>
        <fullName>NADH dehydrogenase subunit 1</fullName>
    </alternativeName>
</protein>
<gene>
    <name type="primary">MT-ND1</name>
    <name type="synonym">MTND1</name>
    <name type="synonym">NADH1</name>
    <name type="synonym">ND1</name>
</gene>
<comment type="function">
    <text evidence="1">Core subunit of the mitochondrial membrane respiratory chain NADH dehydrogenase (Complex I) that is believed to belong to the minimal assembly required for catalysis. Complex I functions in the transfer of electrons from NADH to the respiratory chain. The immediate electron acceptor for the enzyme is believed to be ubiquinone (By similarity).</text>
</comment>
<comment type="catalytic activity">
    <reaction>
        <text>a ubiquinone + NADH + 5 H(+)(in) = a ubiquinol + NAD(+) + 4 H(+)(out)</text>
        <dbReference type="Rhea" id="RHEA:29091"/>
        <dbReference type="Rhea" id="RHEA-COMP:9565"/>
        <dbReference type="Rhea" id="RHEA-COMP:9566"/>
        <dbReference type="ChEBI" id="CHEBI:15378"/>
        <dbReference type="ChEBI" id="CHEBI:16389"/>
        <dbReference type="ChEBI" id="CHEBI:17976"/>
        <dbReference type="ChEBI" id="CHEBI:57540"/>
        <dbReference type="ChEBI" id="CHEBI:57945"/>
        <dbReference type="EC" id="7.1.1.2"/>
    </reaction>
</comment>
<comment type="subcellular location">
    <subcellularLocation>
        <location evidence="1">Mitochondrion inner membrane</location>
        <topology evidence="1">Multi-pass membrane protein</topology>
    </subcellularLocation>
</comment>
<comment type="similarity">
    <text evidence="3">Belongs to the complex I subunit 1 family.</text>
</comment>